<feature type="chain" id="PRO_1000056733" description="UPF0225 protein Psyr_3863">
    <location>
        <begin position="1"/>
        <end position="157"/>
    </location>
</feature>
<proteinExistence type="inferred from homology"/>
<reference key="1">
    <citation type="journal article" date="2005" name="Proc. Natl. Acad. Sci. U.S.A.">
        <title>Comparison of the complete genome sequences of Pseudomonas syringae pv. syringae B728a and pv. tomato DC3000.</title>
        <authorList>
            <person name="Feil H."/>
            <person name="Feil W.S."/>
            <person name="Chain P."/>
            <person name="Larimer F."/>
            <person name="Dibartolo G."/>
            <person name="Copeland A."/>
            <person name="Lykidis A."/>
            <person name="Trong S."/>
            <person name="Nolan M."/>
            <person name="Goltsman E."/>
            <person name="Thiel J."/>
            <person name="Malfatti S."/>
            <person name="Loper J.E."/>
            <person name="Lapidus A."/>
            <person name="Detter J.C."/>
            <person name="Land M."/>
            <person name="Richardson P.M."/>
            <person name="Kyrpides N.C."/>
            <person name="Ivanova N."/>
            <person name="Lindow S.E."/>
        </authorList>
    </citation>
    <scope>NUCLEOTIDE SEQUENCE [LARGE SCALE GENOMIC DNA]</scope>
    <source>
        <strain>B728a</strain>
    </source>
</reference>
<gene>
    <name type="ordered locus">Psyr_3863</name>
</gene>
<comment type="similarity">
    <text evidence="1">Belongs to the UPF0225 family.</text>
</comment>
<protein>
    <recommendedName>
        <fullName evidence="1">UPF0225 protein Psyr_3863</fullName>
    </recommendedName>
</protein>
<organism>
    <name type="scientific">Pseudomonas syringae pv. syringae (strain B728a)</name>
    <dbReference type="NCBI Taxonomy" id="205918"/>
    <lineage>
        <taxon>Bacteria</taxon>
        <taxon>Pseudomonadati</taxon>
        <taxon>Pseudomonadota</taxon>
        <taxon>Gammaproteobacteria</taxon>
        <taxon>Pseudomonadales</taxon>
        <taxon>Pseudomonadaceae</taxon>
        <taxon>Pseudomonas</taxon>
        <taxon>Pseudomonas syringae</taxon>
    </lineage>
</organism>
<evidence type="ECO:0000255" key="1">
    <source>
        <dbReference type="HAMAP-Rule" id="MF_00612"/>
    </source>
</evidence>
<accession>Q4ZPM9</accession>
<name>Y3863_PSEU2</name>
<dbReference type="EMBL" id="CP000075">
    <property type="protein sequence ID" value="AAY38893.1"/>
    <property type="molecule type" value="Genomic_DNA"/>
</dbReference>
<dbReference type="RefSeq" id="WP_011268706.1">
    <property type="nucleotide sequence ID" value="NC_007005.1"/>
</dbReference>
<dbReference type="RefSeq" id="YP_236931.1">
    <property type="nucleotide sequence ID" value="NC_007005.1"/>
</dbReference>
<dbReference type="SMR" id="Q4ZPM9"/>
<dbReference type="STRING" id="205918.Psyr_3863"/>
<dbReference type="KEGG" id="psb:Psyr_3863"/>
<dbReference type="PATRIC" id="fig|205918.7.peg.3970"/>
<dbReference type="eggNOG" id="COG3012">
    <property type="taxonomic scope" value="Bacteria"/>
</dbReference>
<dbReference type="HOGENOM" id="CLU_099590_0_1_6"/>
<dbReference type="OrthoDB" id="21421at2"/>
<dbReference type="Proteomes" id="UP000000426">
    <property type="component" value="Chromosome"/>
</dbReference>
<dbReference type="Gene3D" id="3.10.450.50">
    <property type="match status" value="1"/>
</dbReference>
<dbReference type="HAMAP" id="MF_00612">
    <property type="entry name" value="UPF0225"/>
    <property type="match status" value="1"/>
</dbReference>
<dbReference type="InterPro" id="IPR032710">
    <property type="entry name" value="NTF2-like_dom_sf"/>
</dbReference>
<dbReference type="InterPro" id="IPR004027">
    <property type="entry name" value="SEC_C_motif"/>
</dbReference>
<dbReference type="InterPro" id="IPR023006">
    <property type="entry name" value="UPF0225"/>
</dbReference>
<dbReference type="InterPro" id="IPR048469">
    <property type="entry name" value="YchJ-like_M"/>
</dbReference>
<dbReference type="NCBIfam" id="NF001213">
    <property type="entry name" value="PRK00183.1"/>
    <property type="match status" value="1"/>
</dbReference>
<dbReference type="NCBIfam" id="NF002449">
    <property type="entry name" value="PRK01617.1"/>
    <property type="match status" value="1"/>
</dbReference>
<dbReference type="NCBIfam" id="NF002486">
    <property type="entry name" value="PRK01752.1"/>
    <property type="match status" value="1"/>
</dbReference>
<dbReference type="PANTHER" id="PTHR33747:SF1">
    <property type="entry name" value="ADENYLATE CYCLASE-ASSOCIATED CAP C-TERMINAL DOMAIN-CONTAINING PROTEIN"/>
    <property type="match status" value="1"/>
</dbReference>
<dbReference type="PANTHER" id="PTHR33747">
    <property type="entry name" value="UPF0225 PROTEIN SCO1677"/>
    <property type="match status" value="1"/>
</dbReference>
<dbReference type="Pfam" id="PF02810">
    <property type="entry name" value="SEC-C"/>
    <property type="match status" value="1"/>
</dbReference>
<dbReference type="Pfam" id="PF17775">
    <property type="entry name" value="YchJ_M-like"/>
    <property type="match status" value="1"/>
</dbReference>
<dbReference type="SUPFAM" id="SSF54427">
    <property type="entry name" value="NTF2-like"/>
    <property type="match status" value="1"/>
</dbReference>
<dbReference type="SUPFAM" id="SSF103642">
    <property type="entry name" value="Sec-C motif"/>
    <property type="match status" value="1"/>
</dbReference>
<sequence>MSSAICPCGSGDLLLACCGRYHAGQPAPGAEKLMRSRYSAYVLGLTDYLVQTTLPVQQGGLDREAIAQWSAQSTWLGLEVESSEVFGGKPEHAFVTFTARWHDGNGEHSHRERSSFVQNQGRWYFIDSTVPLKAGRNDACPCGSEQKFKKCCSAYVE</sequence>